<protein>
    <recommendedName>
        <fullName evidence="1">Co-chaperonin GroES</fullName>
    </recommendedName>
    <alternativeName>
        <fullName evidence="1">10 kDa chaperonin</fullName>
    </alternativeName>
    <alternativeName>
        <fullName evidence="1">Chaperonin-10</fullName>
        <shortName evidence="1">Cpn10</shortName>
    </alternativeName>
</protein>
<proteinExistence type="inferred from homology"/>
<comment type="function">
    <text evidence="1">Together with the chaperonin GroEL, plays an essential role in assisting protein folding. The GroEL-GroES system forms a nano-cage that allows encapsulation of the non-native substrate proteins and provides a physical environment optimized to promote and accelerate protein folding. GroES binds to the apical surface of the GroEL ring, thereby capping the opening of the GroEL channel.</text>
</comment>
<comment type="subunit">
    <text evidence="1">Heptamer of 7 subunits arranged in a ring. Interacts with the chaperonin GroEL.</text>
</comment>
<comment type="subcellular location">
    <subcellularLocation>
        <location evidence="1">Cytoplasm</location>
    </subcellularLocation>
</comment>
<comment type="similarity">
    <text evidence="1">Belongs to the GroES chaperonin family.</text>
</comment>
<organism>
    <name type="scientific">Shewanella oneidensis (strain ATCC 700550 / JCM 31522 / CIP 106686 / LMG 19005 / NCIMB 14063 / MR-1)</name>
    <dbReference type="NCBI Taxonomy" id="211586"/>
    <lineage>
        <taxon>Bacteria</taxon>
        <taxon>Pseudomonadati</taxon>
        <taxon>Pseudomonadota</taxon>
        <taxon>Gammaproteobacteria</taxon>
        <taxon>Alteromonadales</taxon>
        <taxon>Shewanellaceae</taxon>
        <taxon>Shewanella</taxon>
    </lineage>
</organism>
<dbReference type="EMBL" id="AE014299">
    <property type="protein sequence ID" value="AAN53781.1"/>
    <property type="molecule type" value="Genomic_DNA"/>
</dbReference>
<dbReference type="RefSeq" id="NP_716336.1">
    <property type="nucleotide sequence ID" value="NC_004347.2"/>
</dbReference>
<dbReference type="RefSeq" id="WP_011071021.1">
    <property type="nucleotide sequence ID" value="NZ_CP053946.1"/>
</dbReference>
<dbReference type="SMR" id="Q8CX49"/>
<dbReference type="STRING" id="211586.SO_0703"/>
<dbReference type="PaxDb" id="211586-SO_0703"/>
<dbReference type="KEGG" id="son:SO_0703"/>
<dbReference type="PATRIC" id="fig|211586.12.peg.678"/>
<dbReference type="eggNOG" id="COG0234">
    <property type="taxonomic scope" value="Bacteria"/>
</dbReference>
<dbReference type="HOGENOM" id="CLU_132825_1_1_6"/>
<dbReference type="OrthoDB" id="9806791at2"/>
<dbReference type="PhylomeDB" id="Q8CX49"/>
<dbReference type="BioCyc" id="SONE211586:G1GMP-663-MONOMER"/>
<dbReference type="Proteomes" id="UP000008186">
    <property type="component" value="Chromosome"/>
</dbReference>
<dbReference type="GO" id="GO:0005737">
    <property type="term" value="C:cytoplasm"/>
    <property type="evidence" value="ECO:0007669"/>
    <property type="project" value="UniProtKB-SubCell"/>
</dbReference>
<dbReference type="GO" id="GO:0005524">
    <property type="term" value="F:ATP binding"/>
    <property type="evidence" value="ECO:0007669"/>
    <property type="project" value="InterPro"/>
</dbReference>
<dbReference type="GO" id="GO:0046872">
    <property type="term" value="F:metal ion binding"/>
    <property type="evidence" value="ECO:0000318"/>
    <property type="project" value="GO_Central"/>
</dbReference>
<dbReference type="GO" id="GO:0044183">
    <property type="term" value="F:protein folding chaperone"/>
    <property type="evidence" value="ECO:0007669"/>
    <property type="project" value="InterPro"/>
</dbReference>
<dbReference type="GO" id="GO:0051087">
    <property type="term" value="F:protein-folding chaperone binding"/>
    <property type="evidence" value="ECO:0000318"/>
    <property type="project" value="GO_Central"/>
</dbReference>
<dbReference type="GO" id="GO:0051082">
    <property type="term" value="F:unfolded protein binding"/>
    <property type="evidence" value="ECO:0000318"/>
    <property type="project" value="GO_Central"/>
</dbReference>
<dbReference type="GO" id="GO:0051085">
    <property type="term" value="P:chaperone cofactor-dependent protein refolding"/>
    <property type="evidence" value="ECO:0000318"/>
    <property type="project" value="GO_Central"/>
</dbReference>
<dbReference type="CDD" id="cd00320">
    <property type="entry name" value="cpn10"/>
    <property type="match status" value="1"/>
</dbReference>
<dbReference type="FunFam" id="2.30.33.40:FF:000001">
    <property type="entry name" value="10 kDa chaperonin"/>
    <property type="match status" value="1"/>
</dbReference>
<dbReference type="Gene3D" id="2.30.33.40">
    <property type="entry name" value="GroES chaperonin"/>
    <property type="match status" value="1"/>
</dbReference>
<dbReference type="HAMAP" id="MF_00580">
    <property type="entry name" value="CH10"/>
    <property type="match status" value="1"/>
</dbReference>
<dbReference type="InterPro" id="IPR020818">
    <property type="entry name" value="Chaperonin_GroES"/>
</dbReference>
<dbReference type="InterPro" id="IPR037124">
    <property type="entry name" value="Chaperonin_GroES_sf"/>
</dbReference>
<dbReference type="InterPro" id="IPR018369">
    <property type="entry name" value="Chaprnonin_Cpn10_CS"/>
</dbReference>
<dbReference type="InterPro" id="IPR011032">
    <property type="entry name" value="GroES-like_sf"/>
</dbReference>
<dbReference type="NCBIfam" id="NF001526">
    <property type="entry name" value="PRK00364.1-1"/>
    <property type="match status" value="1"/>
</dbReference>
<dbReference type="NCBIfam" id="NF001527">
    <property type="entry name" value="PRK00364.1-2"/>
    <property type="match status" value="1"/>
</dbReference>
<dbReference type="NCBIfam" id="NF001531">
    <property type="entry name" value="PRK00364.2-2"/>
    <property type="match status" value="1"/>
</dbReference>
<dbReference type="PANTHER" id="PTHR10772">
    <property type="entry name" value="10 KDA HEAT SHOCK PROTEIN"/>
    <property type="match status" value="1"/>
</dbReference>
<dbReference type="PANTHER" id="PTHR10772:SF58">
    <property type="entry name" value="CO-CHAPERONIN GROES"/>
    <property type="match status" value="1"/>
</dbReference>
<dbReference type="Pfam" id="PF00166">
    <property type="entry name" value="Cpn10"/>
    <property type="match status" value="1"/>
</dbReference>
<dbReference type="PRINTS" id="PR00297">
    <property type="entry name" value="CHAPERONIN10"/>
</dbReference>
<dbReference type="SMART" id="SM00883">
    <property type="entry name" value="Cpn10"/>
    <property type="match status" value="1"/>
</dbReference>
<dbReference type="SUPFAM" id="SSF50129">
    <property type="entry name" value="GroES-like"/>
    <property type="match status" value="1"/>
</dbReference>
<dbReference type="PROSITE" id="PS00681">
    <property type="entry name" value="CHAPERONINS_CPN10"/>
    <property type="match status" value="1"/>
</dbReference>
<reference key="1">
    <citation type="journal article" date="2002" name="Nat. Biotechnol.">
        <title>Genome sequence of the dissimilatory metal ion-reducing bacterium Shewanella oneidensis.</title>
        <authorList>
            <person name="Heidelberg J.F."/>
            <person name="Paulsen I.T."/>
            <person name="Nelson K.E."/>
            <person name="Gaidos E.J."/>
            <person name="Nelson W.C."/>
            <person name="Read T.D."/>
            <person name="Eisen J.A."/>
            <person name="Seshadri R."/>
            <person name="Ward N.L."/>
            <person name="Methe B.A."/>
            <person name="Clayton R.A."/>
            <person name="Meyer T."/>
            <person name="Tsapin A."/>
            <person name="Scott J."/>
            <person name="Beanan M.J."/>
            <person name="Brinkac L.M."/>
            <person name="Daugherty S.C."/>
            <person name="DeBoy R.T."/>
            <person name="Dodson R.J."/>
            <person name="Durkin A.S."/>
            <person name="Haft D.H."/>
            <person name="Kolonay J.F."/>
            <person name="Madupu R."/>
            <person name="Peterson J.D."/>
            <person name="Umayam L.A."/>
            <person name="White O."/>
            <person name="Wolf A.M."/>
            <person name="Vamathevan J.J."/>
            <person name="Weidman J.F."/>
            <person name="Impraim M."/>
            <person name="Lee K."/>
            <person name="Berry K.J."/>
            <person name="Lee C."/>
            <person name="Mueller J."/>
            <person name="Khouri H.M."/>
            <person name="Gill J."/>
            <person name="Utterback T.R."/>
            <person name="McDonald L.A."/>
            <person name="Feldblyum T.V."/>
            <person name="Smith H.O."/>
            <person name="Venter J.C."/>
            <person name="Nealson K.H."/>
            <person name="Fraser C.M."/>
        </authorList>
    </citation>
    <scope>NUCLEOTIDE SEQUENCE [LARGE SCALE GENOMIC DNA]</scope>
    <source>
        <strain>ATCC 700550 / JCM 31522 / CIP 106686 / LMG 19005 / NCIMB 14063 / MR-1</strain>
    </source>
</reference>
<feature type="chain" id="PRO_0000174836" description="Co-chaperonin GroES">
    <location>
        <begin position="1"/>
        <end position="96"/>
    </location>
</feature>
<accession>Q8CX49</accession>
<gene>
    <name evidence="1" type="primary">groES</name>
    <name evidence="1" type="synonym">groS</name>
    <name type="ordered locus">SO_0703</name>
</gene>
<evidence type="ECO:0000255" key="1">
    <source>
        <dbReference type="HAMAP-Rule" id="MF_00580"/>
    </source>
</evidence>
<sequence>MNIRPLHDRVIVKRLEVESTSAGGIVLTGSAAEKSTRGEVLAVGNGRILENGTVRPLDVKVGDVVIFNEGYGVKKEKIDGQEVLILSEADLMAIVG</sequence>
<name>CH10_SHEON</name>
<keyword id="KW-0143">Chaperone</keyword>
<keyword id="KW-0963">Cytoplasm</keyword>
<keyword id="KW-1185">Reference proteome</keyword>